<proteinExistence type="inferred from homology"/>
<evidence type="ECO:0000255" key="1">
    <source>
        <dbReference type="HAMAP-Rule" id="MF_00075"/>
    </source>
</evidence>
<reference key="1">
    <citation type="journal article" date="2009" name="Appl. Environ. Microbiol.">
        <title>Three genomes from the phylum Acidobacteria provide insight into the lifestyles of these microorganisms in soils.</title>
        <authorList>
            <person name="Ward N.L."/>
            <person name="Challacombe J.F."/>
            <person name="Janssen P.H."/>
            <person name="Henrissat B."/>
            <person name="Coutinho P.M."/>
            <person name="Wu M."/>
            <person name="Xie G."/>
            <person name="Haft D.H."/>
            <person name="Sait M."/>
            <person name="Badger J."/>
            <person name="Barabote R.D."/>
            <person name="Bradley B."/>
            <person name="Brettin T.S."/>
            <person name="Brinkac L.M."/>
            <person name="Bruce D."/>
            <person name="Creasy T."/>
            <person name="Daugherty S.C."/>
            <person name="Davidsen T.M."/>
            <person name="DeBoy R.T."/>
            <person name="Detter J.C."/>
            <person name="Dodson R.J."/>
            <person name="Durkin A.S."/>
            <person name="Ganapathy A."/>
            <person name="Gwinn-Giglio M."/>
            <person name="Han C.S."/>
            <person name="Khouri H."/>
            <person name="Kiss H."/>
            <person name="Kothari S.P."/>
            <person name="Madupu R."/>
            <person name="Nelson K.E."/>
            <person name="Nelson W.C."/>
            <person name="Paulsen I."/>
            <person name="Penn K."/>
            <person name="Ren Q."/>
            <person name="Rosovitz M.J."/>
            <person name="Selengut J.D."/>
            <person name="Shrivastava S."/>
            <person name="Sullivan S.A."/>
            <person name="Tapia R."/>
            <person name="Thompson L.S."/>
            <person name="Watkins K.L."/>
            <person name="Yang Q."/>
            <person name="Yu C."/>
            <person name="Zafar N."/>
            <person name="Zhou L."/>
            <person name="Kuske C.R."/>
        </authorList>
    </citation>
    <scope>NUCLEOTIDE SEQUENCE [LARGE SCALE GENOMIC DNA]</scope>
    <source>
        <strain>Ellin345</strain>
    </source>
</reference>
<gene>
    <name evidence="1" type="primary">infA</name>
    <name type="ordered locus">Acid345_1249</name>
</gene>
<organism>
    <name type="scientific">Koribacter versatilis (strain Ellin345)</name>
    <dbReference type="NCBI Taxonomy" id="204669"/>
    <lineage>
        <taxon>Bacteria</taxon>
        <taxon>Pseudomonadati</taxon>
        <taxon>Acidobacteriota</taxon>
        <taxon>Terriglobia</taxon>
        <taxon>Terriglobales</taxon>
        <taxon>Candidatus Korobacteraceae</taxon>
        <taxon>Candidatus Korobacter</taxon>
    </lineage>
</organism>
<keyword id="KW-0963">Cytoplasm</keyword>
<keyword id="KW-0396">Initiation factor</keyword>
<keyword id="KW-0648">Protein biosynthesis</keyword>
<keyword id="KW-1185">Reference proteome</keyword>
<keyword id="KW-0694">RNA-binding</keyword>
<keyword id="KW-0699">rRNA-binding</keyword>
<sequence>MSKEDAIEVMAVVIEPLPNAMFKVELENKHQVLAHVSGKMRKNFIRILPGDRVAVELSPYDLTRGRIVYRYK</sequence>
<dbReference type="EMBL" id="CP000360">
    <property type="protein sequence ID" value="ABF40251.1"/>
    <property type="molecule type" value="Genomic_DNA"/>
</dbReference>
<dbReference type="RefSeq" id="WP_011522053.1">
    <property type="nucleotide sequence ID" value="NC_008009.1"/>
</dbReference>
<dbReference type="SMR" id="Q1IS99"/>
<dbReference type="STRING" id="204669.Acid345_1249"/>
<dbReference type="EnsemblBacteria" id="ABF40251">
    <property type="protein sequence ID" value="ABF40251"/>
    <property type="gene ID" value="Acid345_1249"/>
</dbReference>
<dbReference type="KEGG" id="aba:Acid345_1249"/>
<dbReference type="eggNOG" id="COG0361">
    <property type="taxonomic scope" value="Bacteria"/>
</dbReference>
<dbReference type="HOGENOM" id="CLU_151267_1_0_0"/>
<dbReference type="OrthoDB" id="9803250at2"/>
<dbReference type="Proteomes" id="UP000002432">
    <property type="component" value="Chromosome"/>
</dbReference>
<dbReference type="GO" id="GO:0005829">
    <property type="term" value="C:cytosol"/>
    <property type="evidence" value="ECO:0007669"/>
    <property type="project" value="TreeGrafter"/>
</dbReference>
<dbReference type="GO" id="GO:0043022">
    <property type="term" value="F:ribosome binding"/>
    <property type="evidence" value="ECO:0007669"/>
    <property type="project" value="UniProtKB-UniRule"/>
</dbReference>
<dbReference type="GO" id="GO:0019843">
    <property type="term" value="F:rRNA binding"/>
    <property type="evidence" value="ECO:0007669"/>
    <property type="project" value="UniProtKB-UniRule"/>
</dbReference>
<dbReference type="GO" id="GO:0003743">
    <property type="term" value="F:translation initiation factor activity"/>
    <property type="evidence" value="ECO:0007669"/>
    <property type="project" value="UniProtKB-UniRule"/>
</dbReference>
<dbReference type="CDD" id="cd04451">
    <property type="entry name" value="S1_IF1"/>
    <property type="match status" value="1"/>
</dbReference>
<dbReference type="FunFam" id="2.40.50.140:FF:000002">
    <property type="entry name" value="Translation initiation factor IF-1"/>
    <property type="match status" value="1"/>
</dbReference>
<dbReference type="Gene3D" id="2.40.50.140">
    <property type="entry name" value="Nucleic acid-binding proteins"/>
    <property type="match status" value="1"/>
</dbReference>
<dbReference type="HAMAP" id="MF_00075">
    <property type="entry name" value="IF_1"/>
    <property type="match status" value="1"/>
</dbReference>
<dbReference type="InterPro" id="IPR012340">
    <property type="entry name" value="NA-bd_OB-fold"/>
</dbReference>
<dbReference type="InterPro" id="IPR006196">
    <property type="entry name" value="RNA-binding_domain_S1_IF1"/>
</dbReference>
<dbReference type="InterPro" id="IPR003029">
    <property type="entry name" value="S1_domain"/>
</dbReference>
<dbReference type="InterPro" id="IPR004368">
    <property type="entry name" value="TIF_IF1"/>
</dbReference>
<dbReference type="NCBIfam" id="TIGR00008">
    <property type="entry name" value="infA"/>
    <property type="match status" value="1"/>
</dbReference>
<dbReference type="PANTHER" id="PTHR33370">
    <property type="entry name" value="TRANSLATION INITIATION FACTOR IF-1, CHLOROPLASTIC"/>
    <property type="match status" value="1"/>
</dbReference>
<dbReference type="PANTHER" id="PTHR33370:SF1">
    <property type="entry name" value="TRANSLATION INITIATION FACTOR IF-1, CHLOROPLASTIC"/>
    <property type="match status" value="1"/>
</dbReference>
<dbReference type="Pfam" id="PF01176">
    <property type="entry name" value="eIF-1a"/>
    <property type="match status" value="1"/>
</dbReference>
<dbReference type="SMART" id="SM00316">
    <property type="entry name" value="S1"/>
    <property type="match status" value="1"/>
</dbReference>
<dbReference type="SUPFAM" id="SSF50249">
    <property type="entry name" value="Nucleic acid-binding proteins"/>
    <property type="match status" value="1"/>
</dbReference>
<dbReference type="PROSITE" id="PS50832">
    <property type="entry name" value="S1_IF1_TYPE"/>
    <property type="match status" value="1"/>
</dbReference>
<feature type="chain" id="PRO_0000263757" description="Translation initiation factor IF-1">
    <location>
        <begin position="1"/>
        <end position="72"/>
    </location>
</feature>
<feature type="domain" description="S1-like" evidence="1">
    <location>
        <begin position="1"/>
        <end position="72"/>
    </location>
</feature>
<comment type="function">
    <text evidence="1">One of the essential components for the initiation of protein synthesis. Stabilizes the binding of IF-2 and IF-3 on the 30S subunit to which N-formylmethionyl-tRNA(fMet) subsequently binds. Helps modulate mRNA selection, yielding the 30S pre-initiation complex (PIC). Upon addition of the 50S ribosomal subunit IF-1, IF-2 and IF-3 are released leaving the mature 70S translation initiation complex.</text>
</comment>
<comment type="subunit">
    <text evidence="1">Component of the 30S ribosomal translation pre-initiation complex which assembles on the 30S ribosome in the order IF-2 and IF-3, IF-1 and N-formylmethionyl-tRNA(fMet); mRNA recruitment can occur at any time during PIC assembly.</text>
</comment>
<comment type="subcellular location">
    <subcellularLocation>
        <location evidence="1">Cytoplasm</location>
    </subcellularLocation>
</comment>
<comment type="similarity">
    <text evidence="1">Belongs to the IF-1 family.</text>
</comment>
<protein>
    <recommendedName>
        <fullName evidence="1">Translation initiation factor IF-1</fullName>
    </recommendedName>
</protein>
<name>IF1_KORVE</name>
<accession>Q1IS99</accession>